<name>PANC_SACD2</name>
<keyword id="KW-0067">ATP-binding</keyword>
<keyword id="KW-0963">Cytoplasm</keyword>
<keyword id="KW-0436">Ligase</keyword>
<keyword id="KW-0547">Nucleotide-binding</keyword>
<keyword id="KW-0566">Pantothenate biosynthesis</keyword>
<keyword id="KW-1185">Reference proteome</keyword>
<feature type="chain" id="PRO_0000305541" description="Pantothenate synthetase">
    <location>
        <begin position="1"/>
        <end position="284"/>
    </location>
</feature>
<feature type="active site" description="Proton donor" evidence="1">
    <location>
        <position position="37"/>
    </location>
</feature>
<feature type="binding site" evidence="1">
    <location>
        <begin position="30"/>
        <end position="37"/>
    </location>
    <ligand>
        <name>ATP</name>
        <dbReference type="ChEBI" id="CHEBI:30616"/>
    </ligand>
</feature>
<feature type="binding site" evidence="1">
    <location>
        <position position="61"/>
    </location>
    <ligand>
        <name>(R)-pantoate</name>
        <dbReference type="ChEBI" id="CHEBI:15980"/>
    </ligand>
</feature>
<feature type="binding site" evidence="1">
    <location>
        <position position="61"/>
    </location>
    <ligand>
        <name>beta-alanine</name>
        <dbReference type="ChEBI" id="CHEBI:57966"/>
    </ligand>
</feature>
<feature type="binding site" evidence="1">
    <location>
        <begin position="149"/>
        <end position="152"/>
    </location>
    <ligand>
        <name>ATP</name>
        <dbReference type="ChEBI" id="CHEBI:30616"/>
    </ligand>
</feature>
<feature type="binding site" evidence="1">
    <location>
        <position position="155"/>
    </location>
    <ligand>
        <name>(R)-pantoate</name>
        <dbReference type="ChEBI" id="CHEBI:15980"/>
    </ligand>
</feature>
<feature type="binding site" evidence="1">
    <location>
        <position position="178"/>
    </location>
    <ligand>
        <name>ATP</name>
        <dbReference type="ChEBI" id="CHEBI:30616"/>
    </ligand>
</feature>
<feature type="binding site" evidence="1">
    <location>
        <begin position="186"/>
        <end position="189"/>
    </location>
    <ligand>
        <name>ATP</name>
        <dbReference type="ChEBI" id="CHEBI:30616"/>
    </ligand>
</feature>
<evidence type="ECO:0000255" key="1">
    <source>
        <dbReference type="HAMAP-Rule" id="MF_00158"/>
    </source>
</evidence>
<organism>
    <name type="scientific">Saccharophagus degradans (strain 2-40 / ATCC 43961 / DSM 17024)</name>
    <dbReference type="NCBI Taxonomy" id="203122"/>
    <lineage>
        <taxon>Bacteria</taxon>
        <taxon>Pseudomonadati</taxon>
        <taxon>Pseudomonadota</taxon>
        <taxon>Gammaproteobacteria</taxon>
        <taxon>Cellvibrionales</taxon>
        <taxon>Cellvibrionaceae</taxon>
        <taxon>Saccharophagus</taxon>
    </lineage>
</organism>
<protein>
    <recommendedName>
        <fullName evidence="1">Pantothenate synthetase</fullName>
        <shortName evidence="1">PS</shortName>
        <ecNumber evidence="1">6.3.2.1</ecNumber>
    </recommendedName>
    <alternativeName>
        <fullName evidence="1">Pantoate--beta-alanine ligase</fullName>
    </alternativeName>
    <alternativeName>
        <fullName evidence="1">Pantoate-activating enzyme</fullName>
    </alternativeName>
</protein>
<accession>Q21LV6</accession>
<proteinExistence type="inferred from homology"/>
<reference key="1">
    <citation type="journal article" date="2008" name="PLoS Genet.">
        <title>Complete genome sequence of the complex carbohydrate-degrading marine bacterium, Saccharophagus degradans strain 2-40 T.</title>
        <authorList>
            <person name="Weiner R.M."/>
            <person name="Taylor L.E. II"/>
            <person name="Henrissat B."/>
            <person name="Hauser L."/>
            <person name="Land M."/>
            <person name="Coutinho P.M."/>
            <person name="Rancurel C."/>
            <person name="Saunders E.H."/>
            <person name="Longmire A.G."/>
            <person name="Zhang H."/>
            <person name="Bayer E.A."/>
            <person name="Gilbert H.J."/>
            <person name="Larimer F."/>
            <person name="Zhulin I.B."/>
            <person name="Ekborg N.A."/>
            <person name="Lamed R."/>
            <person name="Richardson P.M."/>
            <person name="Borovok I."/>
            <person name="Hutcheson S."/>
        </authorList>
    </citation>
    <scope>NUCLEOTIDE SEQUENCE [LARGE SCALE GENOMIC DNA]</scope>
    <source>
        <strain>2-40 / ATCC 43961 / DSM 17024</strain>
    </source>
</reference>
<sequence length="284" mass="31462">MELFHHIKSVRDALGKARAAGKTVGFVPTMGNLHNAHLALVQQAKQHCDVVIVSIFVNRLQFGLNEDWDKYPRTLQDDAAKLREIGCDYLFCPEEGEVYPNGMDAQTRVIVPSMANVLCGASRPGHFEGVTTVVTKLFNIVQPDIAVFGIKDYQQLAIIRRMVEDLCIPVEIMAGDIVREADGLAMSSRNGFITAQERPRANQLNQSLNWVKQAILDGRRDFDVLESEAKKQIETAGFRPDYLSISNSKTLEPAANDDTDITVLGAMYTEAARLIDNVSLSVVN</sequence>
<dbReference type="EC" id="6.3.2.1" evidence="1"/>
<dbReference type="EMBL" id="CP000282">
    <property type="protein sequence ID" value="ABD80323.1"/>
    <property type="molecule type" value="Genomic_DNA"/>
</dbReference>
<dbReference type="RefSeq" id="WP_011467543.1">
    <property type="nucleotide sequence ID" value="NC_007912.1"/>
</dbReference>
<dbReference type="SMR" id="Q21LV6"/>
<dbReference type="STRING" id="203122.Sde_1061"/>
<dbReference type="GeneID" id="98612741"/>
<dbReference type="KEGG" id="sde:Sde_1061"/>
<dbReference type="eggNOG" id="COG0414">
    <property type="taxonomic scope" value="Bacteria"/>
</dbReference>
<dbReference type="HOGENOM" id="CLU_047148_0_0_6"/>
<dbReference type="OrthoDB" id="9773087at2"/>
<dbReference type="UniPathway" id="UPA00028">
    <property type="reaction ID" value="UER00005"/>
</dbReference>
<dbReference type="Proteomes" id="UP000001947">
    <property type="component" value="Chromosome"/>
</dbReference>
<dbReference type="GO" id="GO:0005829">
    <property type="term" value="C:cytosol"/>
    <property type="evidence" value="ECO:0007669"/>
    <property type="project" value="TreeGrafter"/>
</dbReference>
<dbReference type="GO" id="GO:0005524">
    <property type="term" value="F:ATP binding"/>
    <property type="evidence" value="ECO:0007669"/>
    <property type="project" value="UniProtKB-KW"/>
</dbReference>
<dbReference type="GO" id="GO:0004592">
    <property type="term" value="F:pantoate-beta-alanine ligase activity"/>
    <property type="evidence" value="ECO:0007669"/>
    <property type="project" value="UniProtKB-UniRule"/>
</dbReference>
<dbReference type="GO" id="GO:0015940">
    <property type="term" value="P:pantothenate biosynthetic process"/>
    <property type="evidence" value="ECO:0007669"/>
    <property type="project" value="UniProtKB-UniRule"/>
</dbReference>
<dbReference type="CDD" id="cd00560">
    <property type="entry name" value="PanC"/>
    <property type="match status" value="1"/>
</dbReference>
<dbReference type="FunFam" id="3.40.50.620:FF:000013">
    <property type="entry name" value="Pantothenate synthetase"/>
    <property type="match status" value="1"/>
</dbReference>
<dbReference type="Gene3D" id="3.40.50.620">
    <property type="entry name" value="HUPs"/>
    <property type="match status" value="1"/>
</dbReference>
<dbReference type="Gene3D" id="3.30.1300.10">
    <property type="entry name" value="Pantoate-beta-alanine ligase, C-terminal domain"/>
    <property type="match status" value="1"/>
</dbReference>
<dbReference type="HAMAP" id="MF_00158">
    <property type="entry name" value="PanC"/>
    <property type="match status" value="1"/>
</dbReference>
<dbReference type="InterPro" id="IPR004821">
    <property type="entry name" value="Cyt_trans-like"/>
</dbReference>
<dbReference type="InterPro" id="IPR003721">
    <property type="entry name" value="Pantoate_ligase"/>
</dbReference>
<dbReference type="InterPro" id="IPR042176">
    <property type="entry name" value="Pantoate_ligase_C"/>
</dbReference>
<dbReference type="InterPro" id="IPR014729">
    <property type="entry name" value="Rossmann-like_a/b/a_fold"/>
</dbReference>
<dbReference type="NCBIfam" id="TIGR00125">
    <property type="entry name" value="cyt_tran_rel"/>
    <property type="match status" value="1"/>
</dbReference>
<dbReference type="NCBIfam" id="TIGR00018">
    <property type="entry name" value="panC"/>
    <property type="match status" value="1"/>
</dbReference>
<dbReference type="PANTHER" id="PTHR21299">
    <property type="entry name" value="CYTIDYLATE KINASE/PANTOATE-BETA-ALANINE LIGASE"/>
    <property type="match status" value="1"/>
</dbReference>
<dbReference type="PANTHER" id="PTHR21299:SF1">
    <property type="entry name" value="PANTOATE--BETA-ALANINE LIGASE"/>
    <property type="match status" value="1"/>
</dbReference>
<dbReference type="Pfam" id="PF02569">
    <property type="entry name" value="Pantoate_ligase"/>
    <property type="match status" value="1"/>
</dbReference>
<dbReference type="SUPFAM" id="SSF52374">
    <property type="entry name" value="Nucleotidylyl transferase"/>
    <property type="match status" value="1"/>
</dbReference>
<gene>
    <name evidence="1" type="primary">panC</name>
    <name type="ordered locus">Sde_1061</name>
</gene>
<comment type="function">
    <text evidence="1">Catalyzes the condensation of pantoate with beta-alanine in an ATP-dependent reaction via a pantoyl-adenylate intermediate.</text>
</comment>
<comment type="catalytic activity">
    <reaction evidence="1">
        <text>(R)-pantoate + beta-alanine + ATP = (R)-pantothenate + AMP + diphosphate + H(+)</text>
        <dbReference type="Rhea" id="RHEA:10912"/>
        <dbReference type="ChEBI" id="CHEBI:15378"/>
        <dbReference type="ChEBI" id="CHEBI:15980"/>
        <dbReference type="ChEBI" id="CHEBI:29032"/>
        <dbReference type="ChEBI" id="CHEBI:30616"/>
        <dbReference type="ChEBI" id="CHEBI:33019"/>
        <dbReference type="ChEBI" id="CHEBI:57966"/>
        <dbReference type="ChEBI" id="CHEBI:456215"/>
        <dbReference type="EC" id="6.3.2.1"/>
    </reaction>
</comment>
<comment type="pathway">
    <text evidence="1">Cofactor biosynthesis; (R)-pantothenate biosynthesis; (R)-pantothenate from (R)-pantoate and beta-alanine: step 1/1.</text>
</comment>
<comment type="subunit">
    <text evidence="1">Homodimer.</text>
</comment>
<comment type="subcellular location">
    <subcellularLocation>
        <location evidence="1">Cytoplasm</location>
    </subcellularLocation>
</comment>
<comment type="miscellaneous">
    <text evidence="1">The reaction proceeds by a bi uni uni bi ping pong mechanism.</text>
</comment>
<comment type="similarity">
    <text evidence="1">Belongs to the pantothenate synthetase family.</text>
</comment>